<comment type="similarity">
    <text evidence="1">Belongs to the UPF0145 family.</text>
</comment>
<feature type="chain" id="PRO_1000012999" description="UPF0145 protein FTL_1249">
    <location>
        <begin position="1"/>
        <end position="106"/>
    </location>
</feature>
<protein>
    <recommendedName>
        <fullName evidence="1">UPF0145 protein FTL_1249</fullName>
    </recommendedName>
</protein>
<accession>Q2A2X3</accession>
<keyword id="KW-1185">Reference proteome</keyword>
<reference key="1">
    <citation type="submission" date="2006-03" db="EMBL/GenBank/DDBJ databases">
        <title>Complete genome sequence of Francisella tularensis LVS (Live Vaccine Strain).</title>
        <authorList>
            <person name="Chain P."/>
            <person name="Larimer F."/>
            <person name="Land M."/>
            <person name="Stilwagen S."/>
            <person name="Larsson P."/>
            <person name="Bearden S."/>
            <person name="Chu M."/>
            <person name="Oyston P."/>
            <person name="Forsman M."/>
            <person name="Andersson S."/>
            <person name="Lindler L."/>
            <person name="Titball R."/>
            <person name="Garcia E."/>
        </authorList>
    </citation>
    <scope>NUCLEOTIDE SEQUENCE [LARGE SCALE GENOMIC DNA]</scope>
    <source>
        <strain>LVS</strain>
    </source>
</reference>
<dbReference type="EMBL" id="AM233362">
    <property type="protein sequence ID" value="CAJ79688.1"/>
    <property type="molecule type" value="Genomic_DNA"/>
</dbReference>
<dbReference type="RefSeq" id="WP_003016377.1">
    <property type="nucleotide sequence ID" value="NZ_CP009694.1"/>
</dbReference>
<dbReference type="SMR" id="Q2A2X3"/>
<dbReference type="KEGG" id="ftl:FTL_1249"/>
<dbReference type="Proteomes" id="UP000001944">
    <property type="component" value="Chromosome"/>
</dbReference>
<dbReference type="Gene3D" id="3.30.110.70">
    <property type="entry name" value="Hypothetical protein apc22750. Chain B"/>
    <property type="match status" value="1"/>
</dbReference>
<dbReference type="HAMAP" id="MF_00338">
    <property type="entry name" value="UPF0145"/>
    <property type="match status" value="1"/>
</dbReference>
<dbReference type="InterPro" id="IPR035439">
    <property type="entry name" value="UPF0145_dom_sf"/>
</dbReference>
<dbReference type="InterPro" id="IPR002765">
    <property type="entry name" value="UPF0145_YbjQ-like"/>
</dbReference>
<dbReference type="PANTHER" id="PTHR34068">
    <property type="entry name" value="UPF0145 PROTEIN YBJQ"/>
    <property type="match status" value="1"/>
</dbReference>
<dbReference type="PANTHER" id="PTHR34068:SF1">
    <property type="entry name" value="UPF0145 PROTEIN YBJQ"/>
    <property type="match status" value="1"/>
</dbReference>
<dbReference type="Pfam" id="PF01906">
    <property type="entry name" value="YbjQ_1"/>
    <property type="match status" value="1"/>
</dbReference>
<dbReference type="SUPFAM" id="SSF117782">
    <property type="entry name" value="YbjQ-like"/>
    <property type="match status" value="1"/>
</dbReference>
<organism>
    <name type="scientific">Francisella tularensis subsp. holarctica (strain LVS)</name>
    <dbReference type="NCBI Taxonomy" id="376619"/>
    <lineage>
        <taxon>Bacteria</taxon>
        <taxon>Pseudomonadati</taxon>
        <taxon>Pseudomonadota</taxon>
        <taxon>Gammaproteobacteria</taxon>
        <taxon>Thiotrichales</taxon>
        <taxon>Francisellaceae</taxon>
        <taxon>Francisella</taxon>
    </lineage>
</organism>
<sequence>MILTTADTLGKREIIEYKGLVTGIIVRTPTITQGILGGLKNIIGGKNTSYTNVCKEARLHAEQEMINQAKELGANAIVAIRYDSSSLGGNTSGTEVFCYGTAVVVR</sequence>
<name>Y1249_FRATH</name>
<evidence type="ECO:0000255" key="1">
    <source>
        <dbReference type="HAMAP-Rule" id="MF_00338"/>
    </source>
</evidence>
<proteinExistence type="inferred from homology"/>
<gene>
    <name type="ordered locus">FTL_1249</name>
</gene>